<dbReference type="EMBL" id="Z48783">
    <property type="protein sequence ID" value="CAA88700.1"/>
    <property type="molecule type" value="Genomic_DNA"/>
</dbReference>
<dbReference type="PIR" id="T21707">
    <property type="entry name" value="T21707"/>
</dbReference>
<dbReference type="RefSeq" id="NP_496195.1">
    <property type="nucleotide sequence ID" value="NM_063794.1"/>
</dbReference>
<dbReference type="SMR" id="Q19992"/>
<dbReference type="FunCoup" id="Q19992">
    <property type="interactions" value="9"/>
</dbReference>
<dbReference type="STRING" id="6239.F33H1.5.1"/>
<dbReference type="PaxDb" id="6239-F33H1.5"/>
<dbReference type="EnsemblMetazoa" id="F33H1.5.1">
    <property type="protein sequence ID" value="F33H1.5.1"/>
    <property type="gene ID" value="WBGene00005079"/>
</dbReference>
<dbReference type="GeneID" id="191794"/>
<dbReference type="KEGG" id="cel:CELE_F33H1.5"/>
<dbReference type="UCSC" id="F33H1.5">
    <property type="organism name" value="c. elegans"/>
</dbReference>
<dbReference type="AGR" id="WB:WBGene00005079"/>
<dbReference type="CTD" id="191794"/>
<dbReference type="WormBase" id="F33H1.5">
    <property type="protein sequence ID" value="CE02207"/>
    <property type="gene ID" value="WBGene00005079"/>
    <property type="gene designation" value="srd-1"/>
</dbReference>
<dbReference type="eggNOG" id="ENOG502TGBW">
    <property type="taxonomic scope" value="Eukaryota"/>
</dbReference>
<dbReference type="GeneTree" id="ENSGT00970000195825"/>
<dbReference type="HOGENOM" id="CLU_057924_3_0_1"/>
<dbReference type="InParanoid" id="Q19992"/>
<dbReference type="OMA" id="CHAMAHS"/>
<dbReference type="OrthoDB" id="5783603at2759"/>
<dbReference type="PhylomeDB" id="Q19992"/>
<dbReference type="PRO" id="PR:Q19992"/>
<dbReference type="Proteomes" id="UP000001940">
    <property type="component" value="Chromosome II"/>
</dbReference>
<dbReference type="Bgee" id="WBGene00005079">
    <property type="expression patterns" value="Expressed in larva and 1 other cell type or tissue"/>
</dbReference>
<dbReference type="GO" id="GO:0016020">
    <property type="term" value="C:membrane"/>
    <property type="evidence" value="ECO:0007669"/>
    <property type="project" value="UniProtKB-SubCell"/>
</dbReference>
<dbReference type="Gene3D" id="1.20.1070.10">
    <property type="entry name" value="Rhodopsin 7-helix transmembrane proteins"/>
    <property type="match status" value="1"/>
</dbReference>
<dbReference type="InterPro" id="IPR019421">
    <property type="entry name" value="7TM_GPCR_serpentine_rcpt_Srd"/>
</dbReference>
<dbReference type="InterPro" id="IPR017452">
    <property type="entry name" value="GPCR_Rhodpsn_7TM"/>
</dbReference>
<dbReference type="InterPro" id="IPR050920">
    <property type="entry name" value="Nematode_rcpt-like_delta"/>
</dbReference>
<dbReference type="PANTHER" id="PTHR22945:SF23">
    <property type="entry name" value="SERPENTINE RECEPTOR CLASS DELTA-1-RELATED"/>
    <property type="match status" value="1"/>
</dbReference>
<dbReference type="PANTHER" id="PTHR22945">
    <property type="entry name" value="SERPENTINE RECEPTOR, CLASS D DELTA"/>
    <property type="match status" value="1"/>
</dbReference>
<dbReference type="Pfam" id="PF10317">
    <property type="entry name" value="7TM_GPCR_Srd"/>
    <property type="match status" value="1"/>
</dbReference>
<dbReference type="SUPFAM" id="SSF81321">
    <property type="entry name" value="Family A G protein-coupled receptor-like"/>
    <property type="match status" value="1"/>
</dbReference>
<accession>Q19992</accession>
<name>SRD1_CAEEL</name>
<feature type="chain" id="PRO_0000104508" description="Serpentine receptor class delta-1">
    <location>
        <begin position="1"/>
        <end position="371"/>
    </location>
</feature>
<feature type="transmembrane region" description="Helical" evidence="1">
    <location>
        <begin position="31"/>
        <end position="51"/>
    </location>
</feature>
<feature type="transmembrane region" description="Helical" evidence="1">
    <location>
        <begin position="62"/>
        <end position="82"/>
    </location>
</feature>
<feature type="transmembrane region" description="Helical" evidence="1">
    <location>
        <begin position="109"/>
        <end position="129"/>
    </location>
</feature>
<feature type="transmembrane region" description="Helical" evidence="1">
    <location>
        <begin position="148"/>
        <end position="168"/>
    </location>
</feature>
<feature type="transmembrane region" description="Helical" evidence="1">
    <location>
        <begin position="209"/>
        <end position="229"/>
    </location>
</feature>
<feature type="transmembrane region" description="Helical" evidence="1">
    <location>
        <begin position="267"/>
        <end position="287"/>
    </location>
</feature>
<feature type="transmembrane region" description="Helical" evidence="1">
    <location>
        <begin position="295"/>
        <end position="315"/>
    </location>
</feature>
<feature type="region of interest" description="Disordered" evidence="2">
    <location>
        <begin position="344"/>
        <end position="371"/>
    </location>
</feature>
<feature type="compositionally biased region" description="Polar residues" evidence="2">
    <location>
        <begin position="354"/>
        <end position="365"/>
    </location>
</feature>
<reference key="1">
    <citation type="journal article" date="1998" name="Science">
        <title>Genome sequence of the nematode C. elegans: a platform for investigating biology.</title>
        <authorList>
            <consortium name="The C. elegans sequencing consortium"/>
        </authorList>
    </citation>
    <scope>NUCLEOTIDE SEQUENCE [LARGE SCALE GENOMIC DNA]</scope>
    <source>
        <strain>Bristol N2</strain>
    </source>
</reference>
<evidence type="ECO:0000255" key="1"/>
<evidence type="ECO:0000256" key="2">
    <source>
        <dbReference type="SAM" id="MobiDB-lite"/>
    </source>
</evidence>
<evidence type="ECO:0000305" key="3"/>
<sequence length="371" mass="41927">MATPTEIAYNRAALIESLQFTFVMDEVGKHLSEVICGFGIVLNLLLIYVIFKRTPKHMRSYAVLLFNFAIFDLLTCVASLLACQKTIFSGLSLTYIFHGPCKYVSSSLCFFCHCFVCHAMAHSQWILLISFIYRYRVLVDGAPDTKKMIVIVSLFYAMSAVIFLFYFWDIGDTNDLKQIMYDLHPQYHYDDREIWGDIVVSGNTTVLTIPSLIAIFYMTMPCVPIYFIIHYFRDKTLSTLASNALSMSPATKASHQKLIMALSIQAAIPIFWLVASGIFTLAEFGIIDGPIPENITFRLMDCIPSSSPLVAFIFIAPYREGLLRIISKTGIYRKQENRVSSVVEKFNQPPKQPTNPAQQSANNDAAKTEKV</sequence>
<proteinExistence type="inferred from homology"/>
<comment type="subcellular location">
    <subcellularLocation>
        <location evidence="3">Membrane</location>
        <topology evidence="3">Multi-pass membrane protein</topology>
    </subcellularLocation>
</comment>
<comment type="similarity">
    <text evidence="3">Belongs to the nematode receptor-like protein srd family.</text>
</comment>
<gene>
    <name type="primary">srd-1</name>
    <name type="ORF">F33H1.5</name>
</gene>
<organism>
    <name type="scientific">Caenorhabditis elegans</name>
    <dbReference type="NCBI Taxonomy" id="6239"/>
    <lineage>
        <taxon>Eukaryota</taxon>
        <taxon>Metazoa</taxon>
        <taxon>Ecdysozoa</taxon>
        <taxon>Nematoda</taxon>
        <taxon>Chromadorea</taxon>
        <taxon>Rhabditida</taxon>
        <taxon>Rhabditina</taxon>
        <taxon>Rhabditomorpha</taxon>
        <taxon>Rhabditoidea</taxon>
        <taxon>Rhabditidae</taxon>
        <taxon>Peloderinae</taxon>
        <taxon>Caenorhabditis</taxon>
    </lineage>
</organism>
<protein>
    <recommendedName>
        <fullName>Serpentine receptor class delta-1</fullName>
        <shortName>Protein srd-1</shortName>
    </recommendedName>
</protein>
<keyword id="KW-0472">Membrane</keyword>
<keyword id="KW-1185">Reference proteome</keyword>
<keyword id="KW-0812">Transmembrane</keyword>
<keyword id="KW-1133">Transmembrane helix</keyword>